<gene>
    <name type="primary">PENK</name>
</gene>
<keyword id="KW-0002">3D-structure</keyword>
<keyword id="KW-0044">Antibiotic</keyword>
<keyword id="KW-0929">Antimicrobial</keyword>
<keyword id="KW-0165">Cleavage on pair of basic residues</keyword>
<keyword id="KW-0968">Cytoplasmic vesicle</keyword>
<keyword id="KW-0903">Direct protein sequencing</keyword>
<keyword id="KW-1015">Disulfide bond</keyword>
<keyword id="KW-0257">Endorphin</keyword>
<keyword id="KW-0527">Neuropeptide</keyword>
<keyword id="KW-0555">Opioid peptide</keyword>
<keyword id="KW-0597">Phosphoprotein</keyword>
<keyword id="KW-1185">Reference proteome</keyword>
<keyword id="KW-0964">Secreted</keyword>
<keyword id="KW-0732">Signal</keyword>
<reference key="1">
    <citation type="journal article" date="1982" name="Nature">
        <title>Cloning and sequence analysis of cDNA for bovine adrenal preproenkephalin.</title>
        <authorList>
            <person name="Noda M."/>
            <person name="Furutani Y."/>
            <person name="Takahashi H."/>
            <person name="Toyosato M."/>
            <person name="Hirose T."/>
            <person name="Inayama S."/>
            <person name="Nakanishi S."/>
            <person name="Numa S."/>
        </authorList>
    </citation>
    <scope>NUCLEOTIDE SEQUENCE [MRNA]</scope>
</reference>
<reference key="2">
    <citation type="submission" date="2005-12" db="EMBL/GenBank/DDBJ databases">
        <authorList>
            <consortium name="NIH - Mammalian Gene Collection (MGC) project"/>
        </authorList>
    </citation>
    <scope>NUCLEOTIDE SEQUENCE [LARGE SCALE MRNA]</scope>
    <source>
        <strain>Crossbred X Angus</strain>
        <tissue>Liver</tissue>
    </source>
</reference>
<reference key="3">
    <citation type="journal article" date="1982" name="Nature">
        <title>Molecular cloning establishes proenkephalin as precursor of enkephalin-containing peptides.</title>
        <authorList>
            <person name="Gubler U."/>
            <person name="Seeburg P."/>
            <person name="Hoffman B.J."/>
            <person name="Gage L.P."/>
            <person name="Udenfriend S."/>
        </authorList>
    </citation>
    <scope>NUCLEOTIDE SEQUENCE [MRNA] OF 47-263</scope>
</reference>
<reference key="4">
    <citation type="journal article" date="1982" name="Proc. Natl. Acad. Sci. U.S.A.">
        <title>Partial characterization of the mRNA that codes for enkephalins in bovine adrenal medulla and human pheochromocytoma.</title>
        <authorList>
            <person name="Comb M."/>
            <person name="Herbert E."/>
            <person name="Crea R."/>
        </authorList>
    </citation>
    <scope>NUCLEOTIDE SEQUENCE [MRNA] OF 211-229</scope>
</reference>
<reference key="5">
    <citation type="journal article" date="1996" name="Eur. J. Biochem.">
        <title>The C-terminal bisphosphorylated proenkephalin-A-(209-237)-peptide from adrenal medullary chromaffin granules possesses antibacterial activity.</title>
        <authorList>
            <person name="Goumon Y."/>
            <person name="Strub J.-M."/>
            <person name="Moniatte M."/>
            <person name="Nulans G."/>
            <person name="Poteur L."/>
            <person name="Hubert P."/>
            <person name="van Dorsselaer A."/>
            <person name="Aunis D."/>
            <person name="Metz-Boutigue M.-H."/>
        </authorList>
    </citation>
    <scope>PROTEIN SEQUENCE OF 233-261</scope>
    <scope>FUNCTION</scope>
    <source>
        <tissue>Chromaffin cell</tissue>
    </source>
</reference>
<reference key="6">
    <citation type="journal article" date="2003" name="Proc. Natl. Acad. Sci. U.S.A.">
        <title>Cathepsin L in secretory vesicles functions as a prohormone-processing enzyme for production of the enkephalin peptide neurotransmitter.</title>
        <authorList>
            <person name="Yasothornsrikul S."/>
            <person name="Greenbaum D."/>
            <person name="Medzihradszky K.F."/>
            <person name="Toneff T."/>
            <person name="Bundey R."/>
            <person name="Miller R."/>
            <person name="Schilling B."/>
            <person name="Petermann I."/>
            <person name="Dehnert J."/>
            <person name="Logvinova A."/>
            <person name="Goldsmith P."/>
            <person name="Neveu J.M."/>
            <person name="Lane W.S."/>
            <person name="Gibson B."/>
            <person name="Reinheckel T."/>
            <person name="Peters C."/>
            <person name="Bogyo M."/>
            <person name="Hook V."/>
        </authorList>
    </citation>
    <scope>PROTEOLYTIC CLEAVAGE</scope>
    <scope>TISSUE SPECIFICITY</scope>
    <scope>SUBCELLULAR LOCATION</scope>
</reference>
<feature type="signal peptide" evidence="4">
    <location>
        <begin position="1"/>
        <end position="24"/>
    </location>
</feature>
<feature type="peptide" id="PRO_0000008206" description="Synenkephalin">
    <location>
        <begin position="25"/>
        <end position="94"/>
    </location>
</feature>
<feature type="peptide" id="PRO_0000008207" description="Met-enkephalin">
    <location>
        <begin position="97"/>
        <end position="101"/>
    </location>
</feature>
<feature type="peptide" id="PRO_0000008208" description="Met-enkephalin">
    <location>
        <begin position="104"/>
        <end position="108"/>
    </location>
</feature>
<feature type="peptide" id="PRO_0000377682" description="PENK(111-130)" evidence="2">
    <location>
        <begin position="111"/>
        <end position="130"/>
    </location>
</feature>
<feature type="peptide" id="PRO_0000008210" description="Met-enkephalin">
    <location>
        <begin position="133"/>
        <end position="137"/>
    </location>
</feature>
<feature type="peptide" id="PRO_0000377683" description="PENK(140-179)" evidence="2">
    <location>
        <begin position="140"/>
        <end position="179"/>
    </location>
</feature>
<feature type="peptide" id="PRO_0000008212" description="Met-enkephalin-Arg-Gly-Leu">
    <location>
        <begin position="182"/>
        <end position="189"/>
    </location>
</feature>
<feature type="propeptide" id="PRO_0000008213">
    <location>
        <begin position="192"/>
        <end position="203"/>
    </location>
</feature>
<feature type="peptide" id="PRO_0000008214" description="Met-enkephalin">
    <location>
        <begin position="206"/>
        <end position="210"/>
    </location>
</feature>
<feature type="propeptide" id="PRO_0000008215">
    <location>
        <begin position="213"/>
        <end position="223"/>
    </location>
</feature>
<feature type="peptide" id="PRO_0000008216" description="Leu-enkephalin">
    <location>
        <begin position="226"/>
        <end position="230"/>
    </location>
</feature>
<feature type="peptide" id="PRO_0000008217" description="Enkelytin" evidence="6">
    <location>
        <begin position="233"/>
        <end position="261"/>
    </location>
</feature>
<feature type="peptide" id="PRO_0000377684" description="PENK(233-254)" evidence="2">
    <location>
        <begin position="233"/>
        <end position="254"/>
    </location>
</feature>
<feature type="peptide" id="PRO_0000008218" description="Met-enkephalin-Arg-Phe">
    <location>
        <begin position="257"/>
        <end position="263"/>
    </location>
</feature>
<feature type="site" description="Cleavage; by CTSL" evidence="5">
    <location>
        <begin position="108"/>
        <end position="109"/>
    </location>
</feature>
<feature type="site" description="Cleavage; by CTSL" evidence="5">
    <location>
        <begin position="109"/>
        <end position="110"/>
    </location>
</feature>
<feature type="site" description="Cleavage; by CTSL" evidence="5">
    <location>
        <begin position="130"/>
        <end position="131"/>
    </location>
</feature>
<feature type="site" description="Cleavage; by CTSL" evidence="5">
    <location>
        <begin position="210"/>
        <end position="211"/>
    </location>
</feature>
<feature type="site" description="Cleavage; by CTSL" evidence="5">
    <location>
        <begin position="211"/>
        <end position="212"/>
    </location>
</feature>
<feature type="site" description="Cleavage; by CTSL" evidence="5">
    <location>
        <begin position="214"/>
        <end position="215"/>
    </location>
</feature>
<feature type="modified residue" description="Phosphoserine" evidence="2">
    <location>
        <position position="247"/>
    </location>
</feature>
<feature type="disulfide bond" evidence="1">
    <location>
        <begin position="26"/>
        <end position="48"/>
    </location>
</feature>
<feature type="disulfide bond" evidence="1">
    <location>
        <begin position="30"/>
        <end position="52"/>
    </location>
</feature>
<feature type="disulfide bond" evidence="1">
    <location>
        <begin position="33"/>
        <end position="65"/>
    </location>
</feature>
<feature type="helix" evidence="11">
    <location>
        <begin position="222"/>
        <end position="224"/>
    </location>
</feature>
<sequence>MARFLGLCTWLLALGPGLLATVRAECSQDCATCSYRLARPTDLNPLACTLECEGKLPSLKTWETCKELLQLTKLELPPDATSALSKQEESHLLAKKYGGFMKRYGGFMKKMDELYPLEVEEEANGGEVLGKRYGGFMKKDAEEDDGLGNSSNLLKELLGAGDQREGSLHQEGSDAEDVSKRYGGFMRGLKRSPHLEDETKELQKRYGGFMRRVGRPEWWMDYQKRYGGFLKRFAEPLPSEEEGESYSKEVPEMEKRYGGFMRF</sequence>
<organism>
    <name type="scientific">Bos taurus</name>
    <name type="common">Bovine</name>
    <dbReference type="NCBI Taxonomy" id="9913"/>
    <lineage>
        <taxon>Eukaryota</taxon>
        <taxon>Metazoa</taxon>
        <taxon>Chordata</taxon>
        <taxon>Craniata</taxon>
        <taxon>Vertebrata</taxon>
        <taxon>Euteleostomi</taxon>
        <taxon>Mammalia</taxon>
        <taxon>Eutheria</taxon>
        <taxon>Laurasiatheria</taxon>
        <taxon>Artiodactyla</taxon>
        <taxon>Ruminantia</taxon>
        <taxon>Pecora</taxon>
        <taxon>Bovidae</taxon>
        <taxon>Bovinae</taxon>
        <taxon>Bos</taxon>
    </lineage>
</organism>
<proteinExistence type="evidence at protein level"/>
<evidence type="ECO:0000250" key="1">
    <source>
        <dbReference type="UniProtKB" id="P01210"/>
    </source>
</evidence>
<evidence type="ECO:0000250" key="2">
    <source>
        <dbReference type="UniProtKB" id="P04094"/>
    </source>
</evidence>
<evidence type="ECO:0000250" key="3">
    <source>
        <dbReference type="UniProtKB" id="P22005"/>
    </source>
</evidence>
<evidence type="ECO:0000255" key="4"/>
<evidence type="ECO:0000269" key="5">
    <source>
    </source>
</evidence>
<evidence type="ECO:0000269" key="6">
    <source>
    </source>
</evidence>
<evidence type="ECO:0000303" key="7">
    <source>
    </source>
</evidence>
<evidence type="ECO:0000303" key="8">
    <source>
    </source>
</evidence>
<evidence type="ECO:0000305" key="9"/>
<evidence type="ECO:0000305" key="10">
    <source>
    </source>
</evidence>
<evidence type="ECO:0007829" key="11">
    <source>
        <dbReference type="PDB" id="8DWC"/>
    </source>
</evidence>
<protein>
    <recommendedName>
        <fullName>Proenkephalin-A</fullName>
    </recommendedName>
    <component>
        <recommendedName>
            <fullName>Synenkephalin</fullName>
        </recommendedName>
    </component>
    <component>
        <recommendedName>
            <fullName evidence="7">Met-enkephalin</fullName>
        </recommendedName>
        <alternativeName>
            <fullName>Opioid growth factor</fullName>
            <shortName>OGF</shortName>
        </alternativeName>
    </component>
    <component>
        <recommendedName>
            <fullName evidence="2">PENK(111-130)</fullName>
        </recommendedName>
    </component>
    <component>
        <recommendedName>
            <fullName evidence="2">PENK(140-179)</fullName>
        </recommendedName>
    </component>
    <component>
        <recommendedName>
            <fullName>Met-enkephalin-Arg-Gly-Leu</fullName>
        </recommendedName>
    </component>
    <component>
        <recommendedName>
            <fullName>Leu-enkephalin</fullName>
        </recommendedName>
    </component>
    <component>
        <recommendedName>
            <fullName evidence="8">Enkelytin</fullName>
        </recommendedName>
    </component>
    <component>
        <recommendedName>
            <fullName evidence="2">PENK(233-254)</fullName>
        </recommendedName>
    </component>
    <component>
        <recommendedName>
            <fullName>Met-enkephalin-Arg-Phe</fullName>
        </recommendedName>
    </component>
</protein>
<dbReference type="EMBL" id="V00109">
    <property type="protein sequence ID" value="CAA23443.1"/>
    <property type="molecule type" value="mRNA"/>
</dbReference>
<dbReference type="EMBL" id="BC111279">
    <property type="protein sequence ID" value="AAI11280.1"/>
    <property type="molecule type" value="mRNA"/>
</dbReference>
<dbReference type="EMBL" id="V00108">
    <property type="protein sequence ID" value="CAA23442.1"/>
    <property type="molecule type" value="mRNA"/>
</dbReference>
<dbReference type="EMBL" id="J00012">
    <property type="protein sequence ID" value="AAA30673.1"/>
    <property type="molecule type" value="mRNA"/>
</dbReference>
<dbReference type="PIR" id="A93272">
    <property type="entry name" value="EQBOA"/>
</dbReference>
<dbReference type="RefSeq" id="NP_776566.1">
    <property type="nucleotide sequence ID" value="NM_174141.2"/>
</dbReference>
<dbReference type="PDB" id="8DWC">
    <property type="method" value="EM"/>
    <property type="resolution" value="2.87 A"/>
    <property type="chains" value="A=213-227"/>
</dbReference>
<dbReference type="PDB" id="8DWG">
    <property type="method" value="EM"/>
    <property type="resolution" value="2.71 A"/>
    <property type="chains" value="A=213-227"/>
</dbReference>
<dbReference type="PDBsum" id="8DWC"/>
<dbReference type="PDBsum" id="8DWG"/>
<dbReference type="EMDB" id="EMD-27752"/>
<dbReference type="EMDB" id="EMD-27753"/>
<dbReference type="SMR" id="P01211"/>
<dbReference type="FunCoup" id="P01211">
    <property type="interactions" value="367"/>
</dbReference>
<dbReference type="STRING" id="9913.ENSBTAP00000066399"/>
<dbReference type="iPTMnet" id="P01211"/>
<dbReference type="PaxDb" id="9913-ENSBTAP00000006478"/>
<dbReference type="Ensembl" id="ENSBTAT00000006478.5">
    <property type="protein sequence ID" value="ENSBTAP00000006478.3"/>
    <property type="gene ID" value="ENSBTAG00000004924.5"/>
</dbReference>
<dbReference type="GeneID" id="281387"/>
<dbReference type="KEGG" id="bta:281387"/>
<dbReference type="CTD" id="5179"/>
<dbReference type="VEuPathDB" id="HostDB:ENSBTAG00000004924"/>
<dbReference type="VGNC" id="VGNC:32746">
    <property type="gene designation" value="PENK"/>
</dbReference>
<dbReference type="eggNOG" id="ENOG502QWWK">
    <property type="taxonomic scope" value="Eukaryota"/>
</dbReference>
<dbReference type="GeneTree" id="ENSGT00950000183149"/>
<dbReference type="HOGENOM" id="CLU_070973_0_0_1"/>
<dbReference type="InParanoid" id="P01211"/>
<dbReference type="OMA" id="NPEAGHY"/>
<dbReference type="OrthoDB" id="9928775at2759"/>
<dbReference type="TreeFam" id="TF332620"/>
<dbReference type="Reactome" id="R-BTA-375276">
    <property type="pathway name" value="Peptide ligand-binding receptors"/>
</dbReference>
<dbReference type="Reactome" id="R-BTA-381426">
    <property type="pathway name" value="Regulation of Insulin-like Growth Factor (IGF) transport and uptake by Insulin-like Growth Factor Binding Proteins (IGFBPs)"/>
</dbReference>
<dbReference type="Reactome" id="R-BTA-418594">
    <property type="pathway name" value="G alpha (i) signalling events"/>
</dbReference>
<dbReference type="Reactome" id="R-BTA-8957275">
    <property type="pathway name" value="Post-translational protein phosphorylation"/>
</dbReference>
<dbReference type="PRO" id="PR:P01211"/>
<dbReference type="Proteomes" id="UP000009136">
    <property type="component" value="Chromosome 14"/>
</dbReference>
<dbReference type="Bgee" id="ENSBTAG00000004924">
    <property type="expression patterns" value="Expressed in urethra and 88 other cell types or tissues"/>
</dbReference>
<dbReference type="GO" id="GO:0043679">
    <property type="term" value="C:axon terminus"/>
    <property type="evidence" value="ECO:0000318"/>
    <property type="project" value="GO_Central"/>
</dbReference>
<dbReference type="GO" id="GO:0034466">
    <property type="term" value="C:chromaffin granule lumen"/>
    <property type="evidence" value="ECO:0007669"/>
    <property type="project" value="UniProtKB-SubCell"/>
</dbReference>
<dbReference type="GO" id="GO:0030425">
    <property type="term" value="C:dendrite"/>
    <property type="evidence" value="ECO:0000318"/>
    <property type="project" value="GO_Central"/>
</dbReference>
<dbReference type="GO" id="GO:0005576">
    <property type="term" value="C:extracellular region"/>
    <property type="evidence" value="ECO:0007669"/>
    <property type="project" value="UniProtKB-SubCell"/>
</dbReference>
<dbReference type="GO" id="GO:0043025">
    <property type="term" value="C:neuronal cell body"/>
    <property type="evidence" value="ECO:0000318"/>
    <property type="project" value="GO_Central"/>
</dbReference>
<dbReference type="GO" id="GO:0005886">
    <property type="term" value="C:plasma membrane"/>
    <property type="evidence" value="ECO:0000318"/>
    <property type="project" value="GO_Central"/>
</dbReference>
<dbReference type="GO" id="GO:0001515">
    <property type="term" value="F:opioid peptide activity"/>
    <property type="evidence" value="ECO:0007669"/>
    <property type="project" value="UniProtKB-KW"/>
</dbReference>
<dbReference type="GO" id="GO:0002118">
    <property type="term" value="P:aggressive behavior"/>
    <property type="evidence" value="ECO:0007669"/>
    <property type="project" value="Ensembl"/>
</dbReference>
<dbReference type="GO" id="GO:0001662">
    <property type="term" value="P:behavioral fear response"/>
    <property type="evidence" value="ECO:0007669"/>
    <property type="project" value="Ensembl"/>
</dbReference>
<dbReference type="GO" id="GO:0007268">
    <property type="term" value="P:chemical synaptic transmission"/>
    <property type="evidence" value="ECO:0000318"/>
    <property type="project" value="GO_Central"/>
</dbReference>
<dbReference type="GO" id="GO:0042742">
    <property type="term" value="P:defense response to bacterium"/>
    <property type="evidence" value="ECO:0007669"/>
    <property type="project" value="UniProtKB-KW"/>
</dbReference>
<dbReference type="GO" id="GO:0038003">
    <property type="term" value="P:G protein-coupled opioid receptor signaling pathway"/>
    <property type="evidence" value="ECO:0007669"/>
    <property type="project" value="Ensembl"/>
</dbReference>
<dbReference type="GO" id="GO:0007626">
    <property type="term" value="P:locomotory behavior"/>
    <property type="evidence" value="ECO:0007669"/>
    <property type="project" value="Ensembl"/>
</dbReference>
<dbReference type="GO" id="GO:0007218">
    <property type="term" value="P:neuropeptide signaling pathway"/>
    <property type="evidence" value="ECO:0000318"/>
    <property type="project" value="GO_Central"/>
</dbReference>
<dbReference type="GO" id="GO:0007600">
    <property type="term" value="P:sensory perception"/>
    <property type="evidence" value="ECO:0000318"/>
    <property type="project" value="GO_Central"/>
</dbReference>
<dbReference type="GO" id="GO:0019233">
    <property type="term" value="P:sensory perception of pain"/>
    <property type="evidence" value="ECO:0007669"/>
    <property type="project" value="Ensembl"/>
</dbReference>
<dbReference type="GO" id="GO:0001964">
    <property type="term" value="P:startle response"/>
    <property type="evidence" value="ECO:0007669"/>
    <property type="project" value="Ensembl"/>
</dbReference>
<dbReference type="GO" id="GO:0019226">
    <property type="term" value="P:transmission of nerve impulse"/>
    <property type="evidence" value="ECO:0007669"/>
    <property type="project" value="Ensembl"/>
</dbReference>
<dbReference type="InterPro" id="IPR006024">
    <property type="entry name" value="Opioid_neupept"/>
</dbReference>
<dbReference type="InterPro" id="IPR000703">
    <property type="entry name" value="Proenkphlin_A"/>
</dbReference>
<dbReference type="PANTHER" id="PTHR11438">
    <property type="entry name" value="PROENKEPHALIN"/>
    <property type="match status" value="1"/>
</dbReference>
<dbReference type="PANTHER" id="PTHR11438:SF3">
    <property type="entry name" value="PROENKEPHALIN-A"/>
    <property type="match status" value="1"/>
</dbReference>
<dbReference type="Pfam" id="PF01160">
    <property type="entry name" value="Opiods_neuropep"/>
    <property type="match status" value="1"/>
</dbReference>
<dbReference type="PRINTS" id="PR01028">
    <property type="entry name" value="OPIOIDPRCRSR"/>
</dbReference>
<dbReference type="PRINTS" id="PR01029">
    <property type="entry name" value="PENKAPRCRSR"/>
</dbReference>
<dbReference type="PROSITE" id="PS01252">
    <property type="entry name" value="OPIOIDS_PRECURSOR"/>
    <property type="match status" value="1"/>
</dbReference>
<comment type="function">
    <molecule>Met-enkephalin</molecule>
    <text evidence="1">Neuropeptide that competes with and mimic the effects of opiate drugs. They play a role in a number of physiologic functions, including pain perception and responses to stress.</text>
</comment>
<comment type="function">
    <molecule>Leu-enkephalin</molecule>
    <text evidence="1">Neuropeptide that competes with and mimic the effects of opiate drugs. They play a role in a number of physiologic functions, including pain perception and responses to stress.</text>
</comment>
<comment type="function">
    <molecule>Met-enkephalin-Arg-Phe</molecule>
    <text evidence="3">Met-enkephalin-Arg-Phe neuropeptide acts as a strong ligand of Mu-type opioid receptor OPRM1. Met-enkephalin-Arg-Phe-binding to OPRM1 in the nucleus accumbens of the brain increases activation of OPRM1, leading to long-term synaptic depression of glutamate release.</text>
</comment>
<comment type="function">
    <molecule>PENK(111-130)</molecule>
    <text evidence="2">Increases glutamate release in the striatum and decreases GABA concentration in the striatum.</text>
</comment>
<comment type="function">
    <molecule>PENK(233-254)</molecule>
    <text evidence="2">Increases glutamate release in the striatum.</text>
</comment>
<comment type="function">
    <molecule>Enkelytin</molecule>
    <text evidence="6">Enkelytin possesses antibacterial activity against Gram-positive bacteria such as Micrococcus luteus and Bacillus megaterium.</text>
</comment>
<comment type="subcellular location">
    <subcellularLocation>
        <location evidence="5">Cytoplasmic vesicle</location>
        <location evidence="5">Secretory vesicle</location>
        <location evidence="5">Chromaffin granule lumen</location>
    </subcellularLocation>
    <subcellularLocation>
        <location evidence="10">Secreted</location>
    </subcellularLocation>
</comment>
<comment type="tissue specificity">
    <text evidence="5">Secreted by neuroendocrine chromaffin cells through cromaffin granules.</text>
</comment>
<comment type="PTM">
    <text evidence="5">Proenkephalin-A is cleaved by CTSL to generate Met-enkephalin.</text>
</comment>
<comment type="PTM">
    <molecule>Met-enkephalin</molecule>
    <text evidence="1">Processed and degraded by ACE.</text>
</comment>
<comment type="PTM">
    <molecule>Leu-enkephalin</molecule>
    <text evidence="1">Processed and degraded by ACE.</text>
</comment>
<comment type="PTM">
    <molecule>Met-enkephalin-Arg-Gly-Leu</molecule>
    <text evidence="1">Probably cleaved by ACE.</text>
</comment>
<comment type="PTM">
    <molecule>Met-enkephalin-Arg-Phe</molecule>
    <text evidence="2">Processed by ACE to generate Met-enkephalin in the nucleus accumbens of the brain.</text>
</comment>
<comment type="PTM">
    <text evidence="1">The N-terminal domain contains 6 conserved cysteines thought to be involved in disulfide bonding and/or processing.</text>
</comment>
<comment type="similarity">
    <text evidence="9">Belongs to the opioid neuropeptide precursor family.</text>
</comment>
<accession>P01211</accession>
<accession>Q2T9T4</accession>
<name>PENK_BOVIN</name>